<evidence type="ECO:0000255" key="1">
    <source>
        <dbReference type="HAMAP-Rule" id="MF_00127"/>
    </source>
</evidence>
<comment type="catalytic activity">
    <reaction evidence="1">
        <text>tRNA(His) + L-histidine + ATP = L-histidyl-tRNA(His) + AMP + diphosphate + H(+)</text>
        <dbReference type="Rhea" id="RHEA:17313"/>
        <dbReference type="Rhea" id="RHEA-COMP:9665"/>
        <dbReference type="Rhea" id="RHEA-COMP:9689"/>
        <dbReference type="ChEBI" id="CHEBI:15378"/>
        <dbReference type="ChEBI" id="CHEBI:30616"/>
        <dbReference type="ChEBI" id="CHEBI:33019"/>
        <dbReference type="ChEBI" id="CHEBI:57595"/>
        <dbReference type="ChEBI" id="CHEBI:78442"/>
        <dbReference type="ChEBI" id="CHEBI:78527"/>
        <dbReference type="ChEBI" id="CHEBI:456215"/>
        <dbReference type="EC" id="6.1.1.21"/>
    </reaction>
</comment>
<comment type="subcellular location">
    <subcellularLocation>
        <location evidence="1">Cytoplasm</location>
    </subcellularLocation>
</comment>
<comment type="similarity">
    <text evidence="1">Belongs to the class-II aminoacyl-tRNA synthetase family.</text>
</comment>
<keyword id="KW-0030">Aminoacyl-tRNA synthetase</keyword>
<keyword id="KW-0067">ATP-binding</keyword>
<keyword id="KW-0963">Cytoplasm</keyword>
<keyword id="KW-0436">Ligase</keyword>
<keyword id="KW-0547">Nucleotide-binding</keyword>
<keyword id="KW-0648">Protein biosynthesis</keyword>
<feature type="chain" id="PRO_1000016394" description="Histidine--tRNA ligase">
    <location>
        <begin position="1"/>
        <end position="418"/>
    </location>
</feature>
<name>SYH_METVS</name>
<proteinExistence type="inferred from homology"/>
<dbReference type="EC" id="6.1.1.21" evidence="1"/>
<dbReference type="EMBL" id="CP000742">
    <property type="protein sequence ID" value="ABR54828.1"/>
    <property type="molecule type" value="Genomic_DNA"/>
</dbReference>
<dbReference type="RefSeq" id="WP_012065757.1">
    <property type="nucleotide sequence ID" value="NC_009634.1"/>
</dbReference>
<dbReference type="SMR" id="A6UQQ6"/>
<dbReference type="STRING" id="406327.Mevan_0924"/>
<dbReference type="GeneID" id="5326059"/>
<dbReference type="KEGG" id="mvn:Mevan_0924"/>
<dbReference type="eggNOG" id="arCOG00404">
    <property type="taxonomic scope" value="Archaea"/>
</dbReference>
<dbReference type="HOGENOM" id="CLU_025113_3_1_2"/>
<dbReference type="OrthoDB" id="8659at2157"/>
<dbReference type="Proteomes" id="UP000001107">
    <property type="component" value="Chromosome"/>
</dbReference>
<dbReference type="GO" id="GO:0005737">
    <property type="term" value="C:cytoplasm"/>
    <property type="evidence" value="ECO:0007669"/>
    <property type="project" value="UniProtKB-SubCell"/>
</dbReference>
<dbReference type="GO" id="GO:0005524">
    <property type="term" value="F:ATP binding"/>
    <property type="evidence" value="ECO:0007669"/>
    <property type="project" value="UniProtKB-UniRule"/>
</dbReference>
<dbReference type="GO" id="GO:0004821">
    <property type="term" value="F:histidine-tRNA ligase activity"/>
    <property type="evidence" value="ECO:0007669"/>
    <property type="project" value="UniProtKB-UniRule"/>
</dbReference>
<dbReference type="GO" id="GO:0006427">
    <property type="term" value="P:histidyl-tRNA aminoacylation"/>
    <property type="evidence" value="ECO:0007669"/>
    <property type="project" value="UniProtKB-UniRule"/>
</dbReference>
<dbReference type="GO" id="GO:0000105">
    <property type="term" value="P:L-histidine biosynthetic process"/>
    <property type="evidence" value="ECO:0007669"/>
    <property type="project" value="InterPro"/>
</dbReference>
<dbReference type="CDD" id="cd00773">
    <property type="entry name" value="HisRS-like_core"/>
    <property type="match status" value="1"/>
</dbReference>
<dbReference type="Gene3D" id="3.40.50.800">
    <property type="entry name" value="Anticodon-binding domain"/>
    <property type="match status" value="1"/>
</dbReference>
<dbReference type="Gene3D" id="3.30.930.10">
    <property type="entry name" value="Bira Bifunctional Protein, Domain 2"/>
    <property type="match status" value="1"/>
</dbReference>
<dbReference type="HAMAP" id="MF_00127">
    <property type="entry name" value="His_tRNA_synth"/>
    <property type="match status" value="1"/>
</dbReference>
<dbReference type="HAMAP" id="MF_00125">
    <property type="entry name" value="HisZ"/>
    <property type="match status" value="1"/>
</dbReference>
<dbReference type="InterPro" id="IPR006195">
    <property type="entry name" value="aa-tRNA-synth_II"/>
</dbReference>
<dbReference type="InterPro" id="IPR045864">
    <property type="entry name" value="aa-tRNA-synth_II/BPL/LPL"/>
</dbReference>
<dbReference type="InterPro" id="IPR004154">
    <property type="entry name" value="Anticodon-bd"/>
</dbReference>
<dbReference type="InterPro" id="IPR036621">
    <property type="entry name" value="Anticodon-bd_dom_sf"/>
</dbReference>
<dbReference type="InterPro" id="IPR015807">
    <property type="entry name" value="His-tRNA-ligase"/>
</dbReference>
<dbReference type="InterPro" id="IPR041715">
    <property type="entry name" value="HisRS-like_core"/>
</dbReference>
<dbReference type="InterPro" id="IPR004516">
    <property type="entry name" value="HisRS/HisZ"/>
</dbReference>
<dbReference type="InterPro" id="IPR004517">
    <property type="entry name" value="HisZ"/>
</dbReference>
<dbReference type="NCBIfam" id="TIGR00442">
    <property type="entry name" value="hisS"/>
    <property type="match status" value="1"/>
</dbReference>
<dbReference type="NCBIfam" id="TIGR00443">
    <property type="entry name" value="hisZ_biosyn_reg"/>
    <property type="match status" value="1"/>
</dbReference>
<dbReference type="PANTHER" id="PTHR43707:SF1">
    <property type="entry name" value="HISTIDINE--TRNA LIGASE, MITOCHONDRIAL-RELATED"/>
    <property type="match status" value="1"/>
</dbReference>
<dbReference type="PANTHER" id="PTHR43707">
    <property type="entry name" value="HISTIDYL-TRNA SYNTHETASE"/>
    <property type="match status" value="1"/>
</dbReference>
<dbReference type="Pfam" id="PF03129">
    <property type="entry name" value="HGTP_anticodon"/>
    <property type="match status" value="1"/>
</dbReference>
<dbReference type="Pfam" id="PF13393">
    <property type="entry name" value="tRNA-synt_His"/>
    <property type="match status" value="1"/>
</dbReference>
<dbReference type="PIRSF" id="PIRSF001549">
    <property type="entry name" value="His-tRNA_synth"/>
    <property type="match status" value="1"/>
</dbReference>
<dbReference type="SUPFAM" id="SSF52954">
    <property type="entry name" value="Class II aaRS ABD-related"/>
    <property type="match status" value="1"/>
</dbReference>
<dbReference type="SUPFAM" id="SSF55681">
    <property type="entry name" value="Class II aaRS and biotin synthetases"/>
    <property type="match status" value="1"/>
</dbReference>
<dbReference type="PROSITE" id="PS50862">
    <property type="entry name" value="AA_TRNA_LIGASE_II"/>
    <property type="match status" value="1"/>
</dbReference>
<reference key="1">
    <citation type="submission" date="2007-06" db="EMBL/GenBank/DDBJ databases">
        <title>Complete sequence of Methanococcus vannielii SB.</title>
        <authorList>
            <consortium name="US DOE Joint Genome Institute"/>
            <person name="Copeland A."/>
            <person name="Lucas S."/>
            <person name="Lapidus A."/>
            <person name="Barry K."/>
            <person name="Glavina del Rio T."/>
            <person name="Dalin E."/>
            <person name="Tice H."/>
            <person name="Pitluck S."/>
            <person name="Chain P."/>
            <person name="Malfatti S."/>
            <person name="Shin M."/>
            <person name="Vergez L."/>
            <person name="Schmutz J."/>
            <person name="Larimer F."/>
            <person name="Land M."/>
            <person name="Hauser L."/>
            <person name="Kyrpides N."/>
            <person name="Anderson I."/>
            <person name="Sieprawska-Lupa M."/>
            <person name="Whitman W.B."/>
            <person name="Richardson P."/>
        </authorList>
    </citation>
    <scope>NUCLEOTIDE SEQUENCE [LARGE SCALE GENOMIC DNA]</scope>
    <source>
        <strain>ATCC 35089 / DSM 1224 / JCM 13029 / OCM 148 / SB</strain>
    </source>
</reference>
<gene>
    <name evidence="1" type="primary">hisS</name>
    <name type="ordered locus">Mevan_0924</name>
</gene>
<sequence length="418" mass="48165">MFQKPKGTRDFLPVEMKKRKLIEKKLRNIFDSYNFSEINTPTFESFELLSKKTGEEIRNQLFVFNDHGNREMGLRPEFTSSVARFYINEFKNTPKPVKMYYFGNCFRYENPQAGRYREFWQMGAELIGSNKSISDAEVLNMAIEGLKSINMDFEINIGHLGVLKGVFEKYSLSEEDETLIRRLIDKEDTEGLKQVLLKIEEEKNIEISKKVFEVLTLKGGKEVISKLKEKLTDFEKSLDALNNLDEILELVPHDYVVNFGIARGLDYYTGMVFEIYGKKEGARQVCGGGRYDNLIELFEGEKSPAVGFAYGFDRIILNIDDFEVQDDSIFIIPVKNDIFLLKECLKIAKTLRDFGNPVEIDLMGRKLNKALNYANSKNIKRVIIIGENDIFSGKIPLKNMETGEQVLIDVKDLKNFPC</sequence>
<organism>
    <name type="scientific">Methanococcus vannielii (strain ATCC 35089 / DSM 1224 / JCM 13029 / OCM 148 / SB)</name>
    <dbReference type="NCBI Taxonomy" id="406327"/>
    <lineage>
        <taxon>Archaea</taxon>
        <taxon>Methanobacteriati</taxon>
        <taxon>Methanobacteriota</taxon>
        <taxon>Methanomada group</taxon>
        <taxon>Methanococci</taxon>
        <taxon>Methanococcales</taxon>
        <taxon>Methanococcaceae</taxon>
        <taxon>Methanococcus</taxon>
    </lineage>
</organism>
<protein>
    <recommendedName>
        <fullName evidence="1">Histidine--tRNA ligase</fullName>
        <ecNumber evidence="1">6.1.1.21</ecNumber>
    </recommendedName>
    <alternativeName>
        <fullName evidence="1">Histidyl-tRNA synthetase</fullName>
        <shortName evidence="1">HisRS</shortName>
    </alternativeName>
</protein>
<accession>A6UQQ6</accession>